<name>RIMP_POLAQ</name>
<reference key="1">
    <citation type="journal article" date="2012" name="Stand. Genomic Sci.">
        <title>Complete genome sequence of Polynucleobacter necessarius subsp. asymbioticus type strain (QLW-P1DMWA-1(T)).</title>
        <authorList>
            <person name="Meincke L."/>
            <person name="Copeland A."/>
            <person name="Lapidus A."/>
            <person name="Lucas S."/>
            <person name="Berry K.W."/>
            <person name="Del Rio T.G."/>
            <person name="Hammon N."/>
            <person name="Dalin E."/>
            <person name="Tice H."/>
            <person name="Pitluck S."/>
            <person name="Richardson P."/>
            <person name="Bruce D."/>
            <person name="Goodwin L."/>
            <person name="Han C."/>
            <person name="Tapia R."/>
            <person name="Detter J.C."/>
            <person name="Schmutz J."/>
            <person name="Brettin T."/>
            <person name="Larimer F."/>
            <person name="Land M."/>
            <person name="Hauser L."/>
            <person name="Kyrpides N.C."/>
            <person name="Ivanova N."/>
            <person name="Goker M."/>
            <person name="Woyke T."/>
            <person name="Wu Q.L."/>
            <person name="Pockl M."/>
            <person name="Hahn M.W."/>
            <person name="Klenk H.P."/>
        </authorList>
    </citation>
    <scope>NUCLEOTIDE SEQUENCE [LARGE SCALE GENOMIC DNA]</scope>
    <source>
        <strain>DSM 18221 / CIP 109841 / QLW-P1DMWA-1</strain>
    </source>
</reference>
<sequence length="163" mass="18125">MRDQQIIAAELENLGYTLVEIEREAGGLLRVTIENPDYERLISVLDCEKVSHQLSYALPVENIPYERLEISSPGLDRPVKSAADFERFTGMEVDLKLRVAAGNRKNFRGVLQGLLSGELNSPDAKFGLLFEGADGAESQLEFSLAEVDKTRLVPVIDFKGRKS</sequence>
<protein>
    <recommendedName>
        <fullName evidence="1">Ribosome maturation factor RimP</fullName>
    </recommendedName>
</protein>
<dbReference type="EMBL" id="CP000655">
    <property type="protein sequence ID" value="ABP34444.1"/>
    <property type="molecule type" value="Genomic_DNA"/>
</dbReference>
<dbReference type="RefSeq" id="WP_011903069.1">
    <property type="nucleotide sequence ID" value="NC_009379.1"/>
</dbReference>
<dbReference type="SMR" id="A4SY80"/>
<dbReference type="GeneID" id="31481616"/>
<dbReference type="KEGG" id="pnu:Pnuc_1229"/>
<dbReference type="eggNOG" id="COG0779">
    <property type="taxonomic scope" value="Bacteria"/>
</dbReference>
<dbReference type="HOGENOM" id="CLU_070525_1_0_4"/>
<dbReference type="Proteomes" id="UP000000231">
    <property type="component" value="Chromosome"/>
</dbReference>
<dbReference type="GO" id="GO:0005829">
    <property type="term" value="C:cytosol"/>
    <property type="evidence" value="ECO:0007669"/>
    <property type="project" value="TreeGrafter"/>
</dbReference>
<dbReference type="GO" id="GO:0000028">
    <property type="term" value="P:ribosomal small subunit assembly"/>
    <property type="evidence" value="ECO:0007669"/>
    <property type="project" value="TreeGrafter"/>
</dbReference>
<dbReference type="GO" id="GO:0006412">
    <property type="term" value="P:translation"/>
    <property type="evidence" value="ECO:0007669"/>
    <property type="project" value="TreeGrafter"/>
</dbReference>
<dbReference type="CDD" id="cd01734">
    <property type="entry name" value="YlxS_C"/>
    <property type="match status" value="1"/>
</dbReference>
<dbReference type="Gene3D" id="3.30.300.70">
    <property type="entry name" value="RimP-like superfamily, N-terminal"/>
    <property type="match status" value="1"/>
</dbReference>
<dbReference type="HAMAP" id="MF_01077">
    <property type="entry name" value="RimP"/>
    <property type="match status" value="1"/>
</dbReference>
<dbReference type="InterPro" id="IPR003728">
    <property type="entry name" value="Ribosome_maturation_RimP"/>
</dbReference>
<dbReference type="InterPro" id="IPR028998">
    <property type="entry name" value="RimP_C"/>
</dbReference>
<dbReference type="InterPro" id="IPR036847">
    <property type="entry name" value="RimP_C_sf"/>
</dbReference>
<dbReference type="InterPro" id="IPR028989">
    <property type="entry name" value="RimP_N"/>
</dbReference>
<dbReference type="InterPro" id="IPR035956">
    <property type="entry name" value="RimP_N_sf"/>
</dbReference>
<dbReference type="NCBIfam" id="NF000929">
    <property type="entry name" value="PRK00092.2-1"/>
    <property type="match status" value="1"/>
</dbReference>
<dbReference type="PANTHER" id="PTHR33867">
    <property type="entry name" value="RIBOSOME MATURATION FACTOR RIMP"/>
    <property type="match status" value="1"/>
</dbReference>
<dbReference type="PANTHER" id="PTHR33867:SF1">
    <property type="entry name" value="RIBOSOME MATURATION FACTOR RIMP"/>
    <property type="match status" value="1"/>
</dbReference>
<dbReference type="Pfam" id="PF17384">
    <property type="entry name" value="DUF150_C"/>
    <property type="match status" value="1"/>
</dbReference>
<dbReference type="Pfam" id="PF02576">
    <property type="entry name" value="RimP_N"/>
    <property type="match status" value="1"/>
</dbReference>
<dbReference type="SUPFAM" id="SSF74942">
    <property type="entry name" value="YhbC-like, C-terminal domain"/>
    <property type="match status" value="1"/>
</dbReference>
<dbReference type="SUPFAM" id="SSF75420">
    <property type="entry name" value="YhbC-like, N-terminal domain"/>
    <property type="match status" value="1"/>
</dbReference>
<proteinExistence type="inferred from homology"/>
<comment type="function">
    <text evidence="1">Required for maturation of 30S ribosomal subunits.</text>
</comment>
<comment type="subcellular location">
    <subcellularLocation>
        <location evidence="1">Cytoplasm</location>
    </subcellularLocation>
</comment>
<comment type="similarity">
    <text evidence="1">Belongs to the RimP family.</text>
</comment>
<keyword id="KW-0963">Cytoplasm</keyword>
<keyword id="KW-1185">Reference proteome</keyword>
<keyword id="KW-0690">Ribosome biogenesis</keyword>
<organism>
    <name type="scientific">Polynucleobacter asymbioticus (strain DSM 18221 / CIP 109841 / QLW-P1DMWA-1)</name>
    <name type="common">Polynucleobacter necessarius subsp. asymbioticus</name>
    <dbReference type="NCBI Taxonomy" id="312153"/>
    <lineage>
        <taxon>Bacteria</taxon>
        <taxon>Pseudomonadati</taxon>
        <taxon>Pseudomonadota</taxon>
        <taxon>Betaproteobacteria</taxon>
        <taxon>Burkholderiales</taxon>
        <taxon>Burkholderiaceae</taxon>
        <taxon>Polynucleobacter</taxon>
    </lineage>
</organism>
<gene>
    <name evidence="1" type="primary">rimP</name>
    <name type="ordered locus">Pnuc_1229</name>
</gene>
<evidence type="ECO:0000255" key="1">
    <source>
        <dbReference type="HAMAP-Rule" id="MF_01077"/>
    </source>
</evidence>
<accession>A4SY80</accession>
<feature type="chain" id="PRO_1000136787" description="Ribosome maturation factor RimP">
    <location>
        <begin position="1"/>
        <end position="163"/>
    </location>
</feature>